<protein>
    <recommendedName>
        <fullName>Phosphoribosylaminoimidazole carboxylase</fullName>
        <ecNumber>4.1.1.21</ecNumber>
    </recommendedName>
    <alternativeName>
        <fullName>AIR carboxylase</fullName>
        <shortName>AIRC</shortName>
    </alternativeName>
</protein>
<proteinExistence type="inferred from homology"/>
<accession>Q92210</accession>
<accession>A0A1D8PK45</accession>
<accession>P78597</accession>
<accession>Q5ANJ5</accession>
<reference key="1">
    <citation type="journal article" date="1997" name="Yeast">
        <title>Sequence analysis of the Candida albicans ADE2 gene and physical separation of the two functionally distinct domains of the phosphoribosylaminoimidazole carboxylase.</title>
        <authorList>
            <person name="Schmuke J.J."/>
            <person name="Davisson V.J."/>
            <person name="Bonar S.L."/>
            <person name="Gheesling-Mullis K."/>
            <person name="Dotson S.B."/>
        </authorList>
    </citation>
    <scope>NUCLEOTIDE SEQUENCE [GENOMIC DNA]</scope>
    <source>
        <strain>ATCC 32354 / B311</strain>
    </source>
</reference>
<reference key="2">
    <citation type="journal article" date="1997" name="Yeast">
        <title>Sequence analysis of Candida albicans phosphoribosyl-aminoimidazole carboxylase (ADE2) gene.</title>
        <authorList>
            <person name="Tsang W.K.P."/>
            <person name="Cao B.-Y."/>
            <person name="Wang J."/>
        </authorList>
    </citation>
    <scope>NUCLEOTIDE SEQUENCE [GENOMIC DNA]</scope>
    <source>
        <strain>SC5314 / ATCC MYA-2876</strain>
    </source>
</reference>
<reference key="3">
    <citation type="journal article" date="2004" name="Proc. Natl. Acad. Sci. U.S.A.">
        <title>The diploid genome sequence of Candida albicans.</title>
        <authorList>
            <person name="Jones T."/>
            <person name="Federspiel N.A."/>
            <person name="Chibana H."/>
            <person name="Dungan J."/>
            <person name="Kalman S."/>
            <person name="Magee B.B."/>
            <person name="Newport G."/>
            <person name="Thorstenson Y.R."/>
            <person name="Agabian N."/>
            <person name="Magee P.T."/>
            <person name="Davis R.W."/>
            <person name="Scherer S."/>
        </authorList>
    </citation>
    <scope>NUCLEOTIDE SEQUENCE [LARGE SCALE GENOMIC DNA]</scope>
    <source>
        <strain>SC5314 / ATCC MYA-2876</strain>
    </source>
</reference>
<reference key="4">
    <citation type="journal article" date="2007" name="Genome Biol.">
        <title>Assembly of the Candida albicans genome into sixteen supercontigs aligned on the eight chromosomes.</title>
        <authorList>
            <person name="van het Hoog M."/>
            <person name="Rast T.J."/>
            <person name="Martchenko M."/>
            <person name="Grindle S."/>
            <person name="Dignard D."/>
            <person name="Hogues H."/>
            <person name="Cuomo C."/>
            <person name="Berriman M."/>
            <person name="Scherer S."/>
            <person name="Magee B.B."/>
            <person name="Whiteway M."/>
            <person name="Chibana H."/>
            <person name="Nantel A."/>
            <person name="Magee P.T."/>
        </authorList>
    </citation>
    <scope>GENOME REANNOTATION</scope>
    <source>
        <strain>SC5314 / ATCC MYA-2876</strain>
    </source>
</reference>
<reference key="5">
    <citation type="journal article" date="2013" name="Genome Biol.">
        <title>Assembly of a phased diploid Candida albicans genome facilitates allele-specific measurements and provides a simple model for repeat and indel structure.</title>
        <authorList>
            <person name="Muzzey D."/>
            <person name="Schwartz K."/>
            <person name="Weissman J.S."/>
            <person name="Sherlock G."/>
        </authorList>
    </citation>
    <scope>NUCLEOTIDE SEQUENCE [LARGE SCALE GENOMIC DNA]</scope>
    <scope>GENOME REANNOTATION</scope>
    <source>
        <strain>SC5314 / ATCC MYA-2876</strain>
    </source>
</reference>
<keyword id="KW-0067">ATP-binding</keyword>
<keyword id="KW-0210">Decarboxylase</keyword>
<keyword id="KW-0456">Lyase</keyword>
<keyword id="KW-0547">Nucleotide-binding</keyword>
<keyword id="KW-0658">Purine biosynthesis</keyword>
<keyword id="KW-1185">Reference proteome</keyword>
<feature type="chain" id="PRO_0000075021" description="Phosphoribosylaminoimidazole carboxylase">
    <location>
        <begin position="1"/>
        <end position="568"/>
    </location>
</feature>
<feature type="domain" description="ATP-grasp" evidence="1">
    <location>
        <begin position="110"/>
        <end position="298"/>
    </location>
</feature>
<feature type="binding site" evidence="1">
    <location>
        <begin position="138"/>
        <end position="193"/>
    </location>
    <ligand>
        <name>ATP</name>
        <dbReference type="ChEBI" id="CHEBI:30616"/>
    </ligand>
</feature>
<feature type="sequence variant" description="In strain: ATCC 32354 / B311.">
    <original>C</original>
    <variation>W</variation>
    <location>
        <position position="219"/>
    </location>
</feature>
<feature type="sequence variant" description="In strain: ATCC 32354 / B311.">
    <original>L</original>
    <variation>P</variation>
    <location>
        <position position="248"/>
    </location>
</feature>
<feature type="sequence variant" description="In strain: ATCC 32354 / B311.">
    <original>L</original>
    <variation>S</variation>
    <location>
        <position position="332"/>
    </location>
</feature>
<feature type="sequence variant" description="In strain: ATCC 32354 / B311.">
    <original>T</original>
    <variation>A</variation>
    <location>
        <position position="352"/>
    </location>
</feature>
<feature type="sequence conflict" description="In Ref. 1; AAC49755 and 2; AAC49742." evidence="2" ref="1 2">
    <original>AK</original>
    <variation>GQ</variation>
    <location>
        <begin position="233"/>
        <end position="234"/>
    </location>
</feature>
<gene>
    <name type="primary">ADE2</name>
    <name type="ordered locus">CAALFM_C304520CA</name>
    <name type="ORF">CaO19.13327</name>
    <name type="ORF">CaO19.5906</name>
</gene>
<organism>
    <name type="scientific">Candida albicans (strain SC5314 / ATCC MYA-2876)</name>
    <name type="common">Yeast</name>
    <dbReference type="NCBI Taxonomy" id="237561"/>
    <lineage>
        <taxon>Eukaryota</taxon>
        <taxon>Fungi</taxon>
        <taxon>Dikarya</taxon>
        <taxon>Ascomycota</taxon>
        <taxon>Saccharomycotina</taxon>
        <taxon>Pichiomycetes</taxon>
        <taxon>Debaryomycetaceae</taxon>
        <taxon>Candida/Lodderomyces clade</taxon>
        <taxon>Candida</taxon>
    </lineage>
</organism>
<sequence>MDSKTVGILGGGQLGRMIVEAAHRLNIKTVILDAAKSPAKQINALDDHVDGSFTNYDSIVKLAEKADVLTVEIEHVDVDALIKVQEKFPKVEIYPLPETIRLIQDKYLQKNHLIKHDVAVTESVAVETNTVDDLLHIGEKFGYPYMLKSRTLAYDGRGNFVVKDKSYCEKALEFLKDRPLYAEKWCPFTKELAVMVVRSLEGEVFAYPTVETIHENNICHLVYAPARIPDTLAKKASILAKNAVKSFLGCGIFGVEMFLLENNELLINEIAPRPHNSGHYTIDACVTSQFEAHVRAVTGLPMPKGFTEFSTSITNAIMLNVLGDKATPNKELEICRRALETPHASVYLYGKTTRPERKMGHINVVTSSMQDAESRLSYILGDTTEIPKSLATDKESPLVGIIMGSDSDLPVMAVGARILKQFGVPFELTIVSAHRTPHRMSEYAIEAPKRGLKCIIAGAGGAAHLPGMVAAMTPLPVIGVPVKGSTLDGVDSLHSIVQMPRGIPVATVAINNSTNAALLAIRILGAYDSKWLTEMNQYMLNMETEVLGKAETLEEIGYEDYLTDKLKK</sequence>
<evidence type="ECO:0000255" key="1">
    <source>
        <dbReference type="PROSITE-ProRule" id="PRU00409"/>
    </source>
</evidence>
<evidence type="ECO:0000305" key="2"/>
<name>PUR6_CANAL</name>
<comment type="catalytic activity">
    <reaction>
        <text>5-amino-1-(5-phospho-D-ribosyl)imidazole-4-carboxylate + H(+) = 5-amino-1-(5-phospho-beta-D-ribosyl)imidazole + CO2</text>
        <dbReference type="Rhea" id="RHEA:10792"/>
        <dbReference type="ChEBI" id="CHEBI:15378"/>
        <dbReference type="ChEBI" id="CHEBI:16526"/>
        <dbReference type="ChEBI" id="CHEBI:77657"/>
        <dbReference type="ChEBI" id="CHEBI:137981"/>
        <dbReference type="EC" id="4.1.1.21"/>
    </reaction>
</comment>
<comment type="pathway">
    <text>Purine metabolism; IMP biosynthesis via de novo pathway; 5-amino-1-(5-phospho-D-ribosyl)imidazole-4-carboxylate from 5-amino-1-(5-phospho-D-ribosyl)imidazole (carboxylase route): step 1/1.</text>
</comment>
<comment type="similarity">
    <text evidence="2">In the C-terminal section; belongs to the AIR carboxylase family. Class I subfamily.</text>
</comment>
<dbReference type="EC" id="4.1.1.21"/>
<dbReference type="EMBL" id="U69606">
    <property type="protein sequence ID" value="AAC49755.1"/>
    <property type="molecule type" value="Genomic_DNA"/>
</dbReference>
<dbReference type="EMBL" id="U75582">
    <property type="protein sequence ID" value="AAC49742.1"/>
    <property type="molecule type" value="Genomic_DNA"/>
</dbReference>
<dbReference type="EMBL" id="CP017625">
    <property type="protein sequence ID" value="AOW28470.1"/>
    <property type="molecule type" value="Genomic_DNA"/>
</dbReference>
<dbReference type="RefSeq" id="XP_723120.1">
    <property type="nucleotide sequence ID" value="XM_718027.1"/>
</dbReference>
<dbReference type="SMR" id="Q92210"/>
<dbReference type="BioGRID" id="1218353">
    <property type="interactions" value="1"/>
</dbReference>
<dbReference type="FunCoup" id="Q92210">
    <property type="interactions" value="195"/>
</dbReference>
<dbReference type="STRING" id="237561.Q92210"/>
<dbReference type="EnsemblFungi" id="C3_04520C_A-T">
    <property type="protein sequence ID" value="C3_04520C_A-T-p1"/>
    <property type="gene ID" value="C3_04520C_A"/>
</dbReference>
<dbReference type="GeneID" id="3635259"/>
<dbReference type="KEGG" id="cal:CAALFM_C304520CA"/>
<dbReference type="CGD" id="CAL0000185210">
    <property type="gene designation" value="ADE2"/>
</dbReference>
<dbReference type="VEuPathDB" id="FungiDB:C3_04520C_A"/>
<dbReference type="eggNOG" id="KOG2835">
    <property type="taxonomic scope" value="Eukaryota"/>
</dbReference>
<dbReference type="HOGENOM" id="CLU_011534_2_1_1"/>
<dbReference type="InParanoid" id="Q92210"/>
<dbReference type="OMA" id="PANVKWK"/>
<dbReference type="OrthoDB" id="15425at2759"/>
<dbReference type="BRENDA" id="4.1.1.21">
    <property type="organism ID" value="1096"/>
</dbReference>
<dbReference type="UniPathway" id="UPA00074">
    <property type="reaction ID" value="UER00130"/>
</dbReference>
<dbReference type="PHI-base" id="PHI:196"/>
<dbReference type="PRO" id="PR:Q92210"/>
<dbReference type="Proteomes" id="UP000000559">
    <property type="component" value="Chromosome 3"/>
</dbReference>
<dbReference type="GO" id="GO:0005524">
    <property type="term" value="F:ATP binding"/>
    <property type="evidence" value="ECO:0007669"/>
    <property type="project" value="UniProtKB-KW"/>
</dbReference>
<dbReference type="GO" id="GO:0046872">
    <property type="term" value="F:metal ion binding"/>
    <property type="evidence" value="ECO:0007669"/>
    <property type="project" value="InterPro"/>
</dbReference>
<dbReference type="GO" id="GO:0004638">
    <property type="term" value="F:phosphoribosylaminoimidazole carboxylase activity"/>
    <property type="evidence" value="ECO:0000315"/>
    <property type="project" value="CGD"/>
</dbReference>
<dbReference type="GO" id="GO:0006189">
    <property type="term" value="P:'de novo' IMP biosynthetic process"/>
    <property type="evidence" value="ECO:0007669"/>
    <property type="project" value="UniProtKB-UniPathway"/>
</dbReference>
<dbReference type="GO" id="GO:0046084">
    <property type="term" value="P:adenine biosynthetic process"/>
    <property type="evidence" value="ECO:0000315"/>
    <property type="project" value="CGD"/>
</dbReference>
<dbReference type="FunFam" id="3.40.50.1970:FF:000013">
    <property type="entry name" value="Phosphoribosylaminoimidazole carboxylase"/>
    <property type="match status" value="1"/>
</dbReference>
<dbReference type="FunFam" id="3.40.50.20:FF:000030">
    <property type="entry name" value="Phosphoribosylaminoimidazole carboxylase"/>
    <property type="match status" value="1"/>
</dbReference>
<dbReference type="FunFam" id="3.30.470.20:FF:000037">
    <property type="entry name" value="Phosphoribosylaminoimidazole carboxylase, chloroplastic"/>
    <property type="match status" value="1"/>
</dbReference>
<dbReference type="FunFam" id="3.30.1490.20:FF:000016">
    <property type="entry name" value="phosphoribosylaminoimidazole carboxylase, chloroplastic"/>
    <property type="match status" value="1"/>
</dbReference>
<dbReference type="Gene3D" id="3.40.50.1970">
    <property type="match status" value="1"/>
</dbReference>
<dbReference type="Gene3D" id="3.40.50.20">
    <property type="match status" value="1"/>
</dbReference>
<dbReference type="Gene3D" id="3.30.1490.20">
    <property type="entry name" value="ATP-grasp fold, A domain"/>
    <property type="match status" value="1"/>
</dbReference>
<dbReference type="Gene3D" id="3.30.470.20">
    <property type="entry name" value="ATP-grasp fold, B domain"/>
    <property type="match status" value="1"/>
</dbReference>
<dbReference type="HAMAP" id="MF_01929">
    <property type="entry name" value="PurE_classI"/>
    <property type="match status" value="1"/>
</dbReference>
<dbReference type="HAMAP" id="MF_01928">
    <property type="entry name" value="PurK"/>
    <property type="match status" value="1"/>
</dbReference>
<dbReference type="InterPro" id="IPR016301">
    <property type="entry name" value="Ade2_fungi/plant"/>
</dbReference>
<dbReference type="InterPro" id="IPR011761">
    <property type="entry name" value="ATP-grasp"/>
</dbReference>
<dbReference type="InterPro" id="IPR003135">
    <property type="entry name" value="ATP-grasp_carboxylate-amine"/>
</dbReference>
<dbReference type="InterPro" id="IPR013815">
    <property type="entry name" value="ATP_grasp_subdomain_1"/>
</dbReference>
<dbReference type="InterPro" id="IPR016185">
    <property type="entry name" value="PreATP-grasp_dom_sf"/>
</dbReference>
<dbReference type="InterPro" id="IPR033747">
    <property type="entry name" value="PurE_ClassI"/>
</dbReference>
<dbReference type="InterPro" id="IPR000031">
    <property type="entry name" value="PurE_dom"/>
</dbReference>
<dbReference type="InterPro" id="IPR005875">
    <property type="entry name" value="PurK"/>
</dbReference>
<dbReference type="InterPro" id="IPR040686">
    <property type="entry name" value="PurK_C"/>
</dbReference>
<dbReference type="InterPro" id="IPR054350">
    <property type="entry name" value="PurT/PurK_preATP-grasp"/>
</dbReference>
<dbReference type="InterPro" id="IPR011054">
    <property type="entry name" value="Rudment_hybrid_motif"/>
</dbReference>
<dbReference type="NCBIfam" id="NF004679">
    <property type="entry name" value="PRK06019.1-5"/>
    <property type="match status" value="1"/>
</dbReference>
<dbReference type="NCBIfam" id="TIGR01162">
    <property type="entry name" value="purE"/>
    <property type="match status" value="1"/>
</dbReference>
<dbReference type="NCBIfam" id="TIGR01161">
    <property type="entry name" value="purK"/>
    <property type="match status" value="1"/>
</dbReference>
<dbReference type="PANTHER" id="PTHR11609:SF5">
    <property type="entry name" value="PHOSPHORIBOSYLAMINOIMIDAZOLE CARBOXYLASE"/>
    <property type="match status" value="1"/>
</dbReference>
<dbReference type="PANTHER" id="PTHR11609">
    <property type="entry name" value="PURINE BIOSYNTHESIS PROTEIN 6/7, PUR6/7"/>
    <property type="match status" value="1"/>
</dbReference>
<dbReference type="Pfam" id="PF00731">
    <property type="entry name" value="AIRC"/>
    <property type="match status" value="1"/>
</dbReference>
<dbReference type="Pfam" id="PF02222">
    <property type="entry name" value="ATP-grasp"/>
    <property type="match status" value="1"/>
</dbReference>
<dbReference type="Pfam" id="PF17769">
    <property type="entry name" value="PurK_C"/>
    <property type="match status" value="1"/>
</dbReference>
<dbReference type="Pfam" id="PF22660">
    <property type="entry name" value="RS_preATP-grasp-like"/>
    <property type="match status" value="1"/>
</dbReference>
<dbReference type="PIRSF" id="PIRSF001340">
    <property type="entry name" value="AIR_carboxylase"/>
    <property type="match status" value="1"/>
</dbReference>
<dbReference type="SMART" id="SM01001">
    <property type="entry name" value="AIRC"/>
    <property type="match status" value="1"/>
</dbReference>
<dbReference type="SUPFAM" id="SSF56059">
    <property type="entry name" value="Glutathione synthetase ATP-binding domain-like"/>
    <property type="match status" value="1"/>
</dbReference>
<dbReference type="SUPFAM" id="SSF52255">
    <property type="entry name" value="N5-CAIR mutase (phosphoribosylaminoimidazole carboxylase, PurE)"/>
    <property type="match status" value="1"/>
</dbReference>
<dbReference type="SUPFAM" id="SSF52440">
    <property type="entry name" value="PreATP-grasp domain"/>
    <property type="match status" value="1"/>
</dbReference>
<dbReference type="SUPFAM" id="SSF51246">
    <property type="entry name" value="Rudiment single hybrid motif"/>
    <property type="match status" value="1"/>
</dbReference>
<dbReference type="PROSITE" id="PS50975">
    <property type="entry name" value="ATP_GRASP"/>
    <property type="match status" value="1"/>
</dbReference>